<comment type="function">
    <text evidence="6 7 9">Mediates Rho signaling to activate NF-kappa-B and may confer increased resistance to apoptosis to cells in gastric tumorigenesis. May play a novel role in the organization of septin structures.</text>
</comment>
<comment type="subunit">
    <text evidence="1 6 9">Interacts via its C-terminal region with the TAX1BP3 PDZ domain. This interaction facilitates Rho-mediated activation of the c-Fos serum response element (SRE). Interacts with SEPT9. Specifically binds to GTP-bound RHOA, RHOB and RHOC and inhibits their GTPase activity.</text>
</comment>
<comment type="interaction">
    <interactant intactId="EBI-446694">
        <id>Q9BST9</id>
    </interactant>
    <interactant intactId="EBI-446668">
        <id>P61586</id>
        <label>RHOA</label>
    </interactant>
    <organismsDiffer>false</organismsDiffer>
    <experiments>9</experiments>
</comment>
<comment type="interaction">
    <interactant intactId="EBI-446694">
        <id>Q9BST9</id>
    </interactant>
    <interactant intactId="EBI-741237">
        <id>O60504</id>
        <label>SORBS3</label>
    </interactant>
    <organismsDiffer>false</organismsDiffer>
    <experiments>3</experiments>
</comment>
<comment type="interaction">
    <interactant intactId="EBI-446694">
        <id>Q9BST9</id>
    </interactant>
    <interactant intactId="EBI-1222956">
        <id>O60504-2</id>
        <label>SORBS3</label>
    </interactant>
    <organismsDiffer>false</organismsDiffer>
    <experiments>3</experiments>
</comment>
<comment type="interaction">
    <interactant intactId="EBI-446694">
        <id>Q9BST9</id>
    </interactant>
    <interactant intactId="EBI-643583">
        <id>Q9QUI0</id>
        <label>Rhoa</label>
    </interactant>
    <organismsDiffer>true</organismsDiffer>
    <experiments>2</experiments>
</comment>
<comment type="alternative products">
    <event type="alternative splicing"/>
    <isoform>
        <id>Q9BST9-1</id>
        <name evidence="5">1</name>
        <sequence type="displayed"/>
    </isoform>
    <isoform>
        <id>Q9BST9-2</id>
        <name evidence="8">2</name>
        <sequence type="described" ref="VSP_052004"/>
    </isoform>
    <isoform>
        <id>Q9BST9-3</id>
        <name evidence="6">3</name>
        <sequence type="described" ref="VSP_052005"/>
    </isoform>
</comment>
<comment type="tissue specificity">
    <text evidence="5 7">Highly expressed in prostate, moderately in kidney, heart, brain, spleen, testis, placenta, small intestine, pancreas, skeletal muscle and peripheral blood leukocytes, and weakly in ovary, colon and thymus. Weakly expressed in all normal cell lines tested. Overexpressed in various cancer cell lines.</text>
</comment>
<comment type="miscellaneous">
    <molecule>Isoform 3</molecule>
    <text evidence="6">Incomplete sequence.</text>
</comment>
<comment type="sequence caution" evidence="12">
    <conflict type="frameshift">
        <sequence resource="EMBL-CDS" id="AAL16767"/>
    </conflict>
</comment>
<protein>
    <recommendedName>
        <fullName>Rhotekin</fullName>
    </recommendedName>
</protein>
<evidence type="ECO:0000250" key="1">
    <source>
        <dbReference type="UniProtKB" id="Q8C6B2"/>
    </source>
</evidence>
<evidence type="ECO:0000255" key="2">
    <source>
        <dbReference type="PROSITE-ProRule" id="PRU00145"/>
    </source>
</evidence>
<evidence type="ECO:0000255" key="3">
    <source>
        <dbReference type="PROSITE-ProRule" id="PRU01207"/>
    </source>
</evidence>
<evidence type="ECO:0000256" key="4">
    <source>
        <dbReference type="SAM" id="MobiDB-lite"/>
    </source>
</evidence>
<evidence type="ECO:0000269" key="5">
    <source>
    </source>
</evidence>
<evidence type="ECO:0000269" key="6">
    <source>
    </source>
</evidence>
<evidence type="ECO:0000269" key="7">
    <source>
    </source>
</evidence>
<evidence type="ECO:0000269" key="8">
    <source>
    </source>
</evidence>
<evidence type="ECO:0000269" key="9">
    <source>
    </source>
</evidence>
<evidence type="ECO:0000303" key="10">
    <source>
    </source>
</evidence>
<evidence type="ECO:0000303" key="11">
    <source>
    </source>
</evidence>
<evidence type="ECO:0000305" key="12"/>
<evidence type="ECO:0000312" key="13">
    <source>
        <dbReference type="EMBL" id="AAG01181.1"/>
    </source>
</evidence>
<evidence type="ECO:0000312" key="14">
    <source>
        <dbReference type="EMBL" id="AAH04558.2"/>
    </source>
</evidence>
<evidence type="ECO:0000312" key="15">
    <source>
        <dbReference type="EMBL" id="AAH17727.1"/>
    </source>
</evidence>
<evidence type="ECO:0000312" key="16">
    <source>
        <dbReference type="EMBL" id="AAL16767.1"/>
    </source>
</evidence>
<evidence type="ECO:0000312" key="17">
    <source>
        <dbReference type="HGNC" id="HGNC:10466"/>
    </source>
</evidence>
<evidence type="ECO:0007744" key="18">
    <source>
    </source>
</evidence>
<evidence type="ECO:0007744" key="19">
    <source>
    </source>
</evidence>
<evidence type="ECO:0007744" key="20">
    <source>
    </source>
</evidence>
<evidence type="ECO:0007744" key="21">
    <source>
    </source>
</evidence>
<evidence type="ECO:0007744" key="22">
    <source>
    </source>
</evidence>
<name>RTKN_HUMAN</name>
<proteinExistence type="evidence at protein level"/>
<feature type="chain" id="PRO_0000233940" description="Rhotekin">
    <location>
        <begin position="1"/>
        <end position="563"/>
    </location>
</feature>
<feature type="domain" description="REM-1" evidence="3">
    <location>
        <begin position="17"/>
        <end position="98"/>
    </location>
</feature>
<feature type="domain" description="PH" evidence="2">
    <location>
        <begin position="309"/>
        <end position="416"/>
    </location>
</feature>
<feature type="region of interest" description="Disordered" evidence="4">
    <location>
        <begin position="96"/>
        <end position="116"/>
    </location>
</feature>
<feature type="region of interest" description="Disordered" evidence="4">
    <location>
        <begin position="518"/>
        <end position="563"/>
    </location>
</feature>
<feature type="modified residue" description="Omega-N-methylarginine" evidence="21">
    <location>
        <position position="14"/>
    </location>
</feature>
<feature type="modified residue" description="Phosphoserine" evidence="22">
    <location>
        <position position="30"/>
    </location>
</feature>
<feature type="modified residue" description="Phosphoserine" evidence="22">
    <location>
        <position position="106"/>
    </location>
</feature>
<feature type="modified residue" description="Asymmetric dimethylarginine" evidence="1">
    <location>
        <position position="230"/>
    </location>
</feature>
<feature type="modified residue" description="Phosphoserine" evidence="18 19">
    <location>
        <position position="232"/>
    </location>
</feature>
<feature type="modified residue" description="Phosphoserine" evidence="20">
    <location>
        <position position="520"/>
    </location>
</feature>
<feature type="modified residue" description="Phosphoserine" evidence="20">
    <location>
        <position position="529"/>
    </location>
</feature>
<feature type="modified residue" description="Phosphoserine" evidence="18">
    <location>
        <position position="543"/>
    </location>
</feature>
<feature type="splice variant" id="VSP_052005" description="In isoform 3." evidence="10">
    <location>
        <begin position="1"/>
        <end position="50"/>
    </location>
</feature>
<feature type="splice variant" id="VSP_052004" description="In isoform 2." evidence="11">
    <original>MFSRNHRSRVTVARGSALEMEFKRGRFRLSLFSDLP</original>
    <variation>MQDRLHILEDLNMLYIRQMALSL</variation>
    <location>
        <begin position="1"/>
        <end position="36"/>
    </location>
</feature>
<feature type="mutagenesis site" description="Impairs interaction with TAX1BP3." evidence="6">
    <original>SPV</original>
    <variation>APA</variation>
    <location>
        <begin position="561"/>
        <end position="563"/>
    </location>
</feature>
<feature type="sequence conflict" description="In Ref. 1." evidence="12" ref="1">
    <original>LE</original>
    <variation>WR</variation>
    <location>
        <begin position="18"/>
        <end position="19"/>
    </location>
</feature>
<feature type="sequence conflict" description="In Ref. 1; AAL16767." evidence="12" ref="1">
    <original>A</original>
    <variation>P</variation>
    <location>
        <position position="55"/>
    </location>
</feature>
<feature type="sequence conflict" description="In Ref. 1; AAL16767." evidence="12" ref="1">
    <original>A</original>
    <variation>P</variation>
    <location>
        <position position="61"/>
    </location>
</feature>
<feature type="sequence conflict" description="In Ref. 1; AAL16767." evidence="12" ref="1">
    <original>RE</original>
    <variation>AR</variation>
    <location>
        <begin position="65"/>
        <end position="66"/>
    </location>
</feature>
<feature type="sequence conflict" description="In Ref. 1; AAL16767." evidence="12" ref="1">
    <original>S</original>
    <variation>N</variation>
    <location>
        <position position="102"/>
    </location>
</feature>
<feature type="sequence conflict" description="In Ref. 1; AAL16767." evidence="12" ref="1">
    <original>A</original>
    <variation>P</variation>
    <location>
        <position position="112"/>
    </location>
</feature>
<feature type="sequence conflict" description="In Ref. 2; AAG01181." evidence="12" ref="2">
    <original>Q</original>
    <variation>H</variation>
    <location>
        <position position="160"/>
    </location>
</feature>
<feature type="sequence conflict" description="In Ref. 2; AAG01181." evidence="12" ref="2">
    <original>E</original>
    <variation>D</variation>
    <location>
        <position position="163"/>
    </location>
</feature>
<feature type="sequence conflict" description="In Ref. 2; AAG01181." evidence="12" ref="2">
    <original>S</original>
    <variation>N</variation>
    <location>
        <position position="178"/>
    </location>
</feature>
<feature type="sequence conflict" description="In Ref. 2; AAG01181." evidence="12" ref="2">
    <original>EEGA</original>
    <variation>KKRG</variation>
    <location>
        <begin position="202"/>
        <end position="205"/>
    </location>
</feature>
<feature type="sequence conflict" description="In Ref. 2; AAG01181." evidence="12" ref="2">
    <original>R</original>
    <variation>K</variation>
    <location>
        <position position="227"/>
    </location>
</feature>
<feature type="sequence conflict" description="In Ref. 1; AAL16767." evidence="12" ref="1">
    <original>R</original>
    <variation>L</variation>
    <location>
        <position position="274"/>
    </location>
</feature>
<feature type="sequence conflict" description="In Ref. 2; AAG01181." evidence="12" ref="2">
    <original>G</original>
    <variation>S</variation>
    <location>
        <position position="336"/>
    </location>
</feature>
<feature type="sequence conflict" description="In Ref. 1; AAL16767." evidence="12" ref="1">
    <original>L</original>
    <variation>F</variation>
    <location>
        <position position="356"/>
    </location>
</feature>
<feature type="sequence conflict" description="In Ref. 2; AAG01181." evidence="12" ref="2">
    <original>RV</original>
    <variation>PI</variation>
    <location>
        <begin position="365"/>
        <end position="366"/>
    </location>
</feature>
<feature type="sequence conflict" description="In Ref. 2; AAG01181." evidence="12" ref="2">
    <original>D</original>
    <variation>E</variation>
    <location>
        <position position="372"/>
    </location>
</feature>
<feature type="sequence conflict" description="In Ref. 2; AAG01181." evidence="12" ref="2">
    <original>REALQS</original>
    <variation>LETLQN</variation>
    <location>
        <begin position="401"/>
        <end position="406"/>
    </location>
</feature>
<feature type="sequence conflict" description="In Ref. 2; AAG01181." evidence="12" ref="2">
    <original>RKP</original>
    <variation>PKT</variation>
    <location>
        <begin position="437"/>
        <end position="439"/>
    </location>
</feature>
<feature type="sequence conflict" description="In Ref. 2; AAG01181." evidence="12" ref="2">
    <original>A</original>
    <variation>V</variation>
    <location>
        <position position="454"/>
    </location>
</feature>
<feature type="sequence conflict" description="In Ref. 2; AAG01181." evidence="12" ref="2">
    <original>P</original>
    <variation>T</variation>
    <location>
        <position position="540"/>
    </location>
</feature>
<feature type="sequence conflict" description="In Ref. 2; AAG01181." evidence="12" ref="2">
    <original>L</original>
    <variation>F</variation>
    <location>
        <position position="549"/>
    </location>
</feature>
<feature type="sequence conflict" description="In Ref. 2; AAG01181." evidence="12" ref="2">
    <original>P</original>
    <variation>L</variation>
    <location>
        <position position="555"/>
    </location>
</feature>
<sequence length="563" mass="62667">MFSRNHRSRVTVARGSALEMEFKRGRFRLSLFSDLPEDTELQRKLDHEIRMREGACKLLAACSQREQALEATKSLLVCNSRILSYMGELQRRKEAQVLGKTSRRPSDSGPPAERSPCRGRVCISDLRIPLMWKDTEYFKNKGDLHRWAVFLLLQLGEHIQDTEMILVDRTLTDISFQSNVLFAEAGPDFELRLELYGACVEEEGALTGGPKRLATKLSSSLGRSSGRRVRASLDSAGGSGSSPILLPTPVVGGPRYHLLAHTTLTLAAVQDGFRTHDLTLASHEENPAWLPLYGSVCCRLAAQPLCMTQPTASGTLRVQQAGEMQNWAQVHGVLKGTNLFCYRQPEDADTGEEPLLTIAVNKETRVRAGELDQALGRPFTLSISNQYGDDEVTHTLQTESREALQSWMEALWQLFFDMSQWKQCCDEIMKIETPAPRKPPQALAKQGSLYHEMAIEPLDDIAAVTDILTQREGARLETPPPWLAMFTDQPALPNPCSPASVAPAPDWTHPLPWGRPRTFSLDAVPPDHSPRARSVAPLPPQRSPRTRGLCSKGQPRTWLQSPV</sequence>
<keyword id="KW-0025">Alternative splicing</keyword>
<keyword id="KW-0053">Apoptosis</keyword>
<keyword id="KW-0175">Coiled coil</keyword>
<keyword id="KW-0342">GTP-binding</keyword>
<keyword id="KW-0488">Methylation</keyword>
<keyword id="KW-0547">Nucleotide-binding</keyword>
<keyword id="KW-0597">Phosphoprotein</keyword>
<keyword id="KW-1267">Proteomics identification</keyword>
<keyword id="KW-1185">Reference proteome</keyword>
<accession>Q9BST9</accession>
<accession>H7BXD4</accession>
<accession>Q8WVN1</accession>
<accession>Q96PT6</accession>
<accession>Q9HB05</accession>
<reference evidence="12 16" key="1">
    <citation type="journal article" date="2000" name="Genomics">
        <title>Molecular cloning, expression characterization, and mapping of a novel putative inhibitor of rho GTPase activity, RTKN, to D2S145-D2S286.</title>
        <authorList>
            <person name="Fu Q."/>
            <person name="Yu L."/>
            <person name="Liu Q."/>
            <person name="Zhang J."/>
            <person name="Zhang H."/>
            <person name="Zhao S."/>
        </authorList>
    </citation>
    <scope>NUCLEOTIDE SEQUENCE [MRNA] (ISOFORM 1)</scope>
    <scope>TISSUE SPECIFICITY</scope>
    <source>
        <tissue evidence="5">Kidney</tissue>
    </source>
</reference>
<reference evidence="12 13" key="2">
    <citation type="journal article" date="2000" name="J. Biol. Chem.">
        <title>The PDZ protein TIP-1 interacts with the Rho effector rhotekin and is involved in Rho signaling to the serum response element.</title>
        <authorList>
            <person name="Reynaud C."/>
            <person name="Fabre S."/>
            <person name="Jalinot P."/>
        </authorList>
    </citation>
    <scope>NUCLEOTIDE SEQUENCE [MRNA] (ISOFORM 3)</scope>
    <scope>FUNCTION</scope>
    <scope>INTERACTION WITH RHOA AND TAX1BP3</scope>
    <scope>MUTAGENESIS OF 561-SER--VAL-563</scope>
    <source>
        <tissue evidence="6">Leukocyte</tissue>
    </source>
</reference>
<reference key="3">
    <citation type="journal article" date="2005" name="Nature">
        <title>Generation and annotation of the DNA sequences of human chromosomes 2 and 4.</title>
        <authorList>
            <person name="Hillier L.W."/>
            <person name="Graves T.A."/>
            <person name="Fulton R.S."/>
            <person name="Fulton L.A."/>
            <person name="Pepin K.H."/>
            <person name="Minx P."/>
            <person name="Wagner-McPherson C."/>
            <person name="Layman D."/>
            <person name="Wylie K."/>
            <person name="Sekhon M."/>
            <person name="Becker M.C."/>
            <person name="Fewell G.A."/>
            <person name="Delehaunty K.D."/>
            <person name="Miner T.L."/>
            <person name="Nash W.E."/>
            <person name="Kremitzki C."/>
            <person name="Oddy L."/>
            <person name="Du H."/>
            <person name="Sun H."/>
            <person name="Bradshaw-Cordum H."/>
            <person name="Ali J."/>
            <person name="Carter J."/>
            <person name="Cordes M."/>
            <person name="Harris A."/>
            <person name="Isak A."/>
            <person name="van Brunt A."/>
            <person name="Nguyen C."/>
            <person name="Du F."/>
            <person name="Courtney L."/>
            <person name="Kalicki J."/>
            <person name="Ozersky P."/>
            <person name="Abbott S."/>
            <person name="Armstrong J."/>
            <person name="Belter E.A."/>
            <person name="Caruso L."/>
            <person name="Cedroni M."/>
            <person name="Cotton M."/>
            <person name="Davidson T."/>
            <person name="Desai A."/>
            <person name="Elliott G."/>
            <person name="Erb T."/>
            <person name="Fronick C."/>
            <person name="Gaige T."/>
            <person name="Haakenson W."/>
            <person name="Haglund K."/>
            <person name="Holmes A."/>
            <person name="Harkins R."/>
            <person name="Kim K."/>
            <person name="Kruchowski S.S."/>
            <person name="Strong C.M."/>
            <person name="Grewal N."/>
            <person name="Goyea E."/>
            <person name="Hou S."/>
            <person name="Levy A."/>
            <person name="Martinka S."/>
            <person name="Mead K."/>
            <person name="McLellan M.D."/>
            <person name="Meyer R."/>
            <person name="Randall-Maher J."/>
            <person name="Tomlinson C."/>
            <person name="Dauphin-Kohlberg S."/>
            <person name="Kozlowicz-Reilly A."/>
            <person name="Shah N."/>
            <person name="Swearengen-Shahid S."/>
            <person name="Snider J."/>
            <person name="Strong J.T."/>
            <person name="Thompson J."/>
            <person name="Yoakum M."/>
            <person name="Leonard S."/>
            <person name="Pearman C."/>
            <person name="Trani L."/>
            <person name="Radionenko M."/>
            <person name="Waligorski J.E."/>
            <person name="Wang C."/>
            <person name="Rock S.M."/>
            <person name="Tin-Wollam A.-M."/>
            <person name="Maupin R."/>
            <person name="Latreille P."/>
            <person name="Wendl M.C."/>
            <person name="Yang S.-P."/>
            <person name="Pohl C."/>
            <person name="Wallis J.W."/>
            <person name="Spieth J."/>
            <person name="Bieri T.A."/>
            <person name="Berkowicz N."/>
            <person name="Nelson J.O."/>
            <person name="Osborne J."/>
            <person name="Ding L."/>
            <person name="Meyer R."/>
            <person name="Sabo A."/>
            <person name="Shotland Y."/>
            <person name="Sinha P."/>
            <person name="Wohldmann P.E."/>
            <person name="Cook L.L."/>
            <person name="Hickenbotham M.T."/>
            <person name="Eldred J."/>
            <person name="Williams D."/>
            <person name="Jones T.A."/>
            <person name="She X."/>
            <person name="Ciccarelli F.D."/>
            <person name="Izaurralde E."/>
            <person name="Taylor J."/>
            <person name="Schmutz J."/>
            <person name="Myers R.M."/>
            <person name="Cox D.R."/>
            <person name="Huang X."/>
            <person name="McPherson J.D."/>
            <person name="Mardis E.R."/>
            <person name="Clifton S.W."/>
            <person name="Warren W.C."/>
            <person name="Chinwalla A.T."/>
            <person name="Eddy S.R."/>
            <person name="Marra M.A."/>
            <person name="Ovcharenko I."/>
            <person name="Furey T.S."/>
            <person name="Miller W."/>
            <person name="Eichler E.E."/>
            <person name="Bork P."/>
            <person name="Suyama M."/>
            <person name="Torrents D."/>
            <person name="Waterston R.H."/>
            <person name="Wilson R.K."/>
        </authorList>
    </citation>
    <scope>NUCLEOTIDE SEQUENCE [LARGE SCALE GENOMIC DNA]</scope>
</reference>
<reference evidence="12 14" key="4">
    <citation type="journal article" date="2004" name="Genome Res.">
        <title>The status, quality, and expansion of the NIH full-length cDNA project: the Mammalian Gene Collection (MGC).</title>
        <authorList>
            <consortium name="The MGC Project Team"/>
        </authorList>
    </citation>
    <scope>NUCLEOTIDE SEQUENCE [LARGE SCALE MRNA] (ISOFORMS 1 AND 2)</scope>
    <source>
        <tissue evidence="15">Brain</tissue>
        <tissue evidence="14">Placenta</tissue>
    </source>
</reference>
<reference evidence="12" key="5">
    <citation type="journal article" date="2004" name="Oncogene">
        <title>Rho/Rhotekin-mediated NF-kappaB activation confers resistance to apoptosis.</title>
        <authorList>
            <person name="Liu C.-A."/>
            <person name="Wang M.-J."/>
            <person name="Chi C.-W."/>
            <person name="Wu C.-W."/>
            <person name="Chen J.-Y."/>
        </authorList>
    </citation>
    <scope>FUNCTION</scope>
    <scope>TISSUE SPECIFICITY</scope>
</reference>
<reference evidence="12" key="6">
    <citation type="journal article" date="2005" name="Oncogene">
        <title>Possible role of Rho/Rhotekin signaling in mammalian septin organization.</title>
        <authorList>
            <person name="Ito H."/>
            <person name="Iwamoto I."/>
            <person name="Morishita R."/>
            <person name="Nozawa Y."/>
            <person name="Narumiya S."/>
            <person name="Asano T."/>
            <person name="Nagata K."/>
        </authorList>
    </citation>
    <scope>FUNCTION</scope>
    <scope>INTERACTION WITH SEPT9</scope>
</reference>
<reference key="7">
    <citation type="journal article" date="2008" name="Proc. Natl. Acad. Sci. U.S.A.">
        <title>A quantitative atlas of mitotic phosphorylation.</title>
        <authorList>
            <person name="Dephoure N."/>
            <person name="Zhou C."/>
            <person name="Villen J."/>
            <person name="Beausoleil S.A."/>
            <person name="Bakalarski C.E."/>
            <person name="Elledge S.J."/>
            <person name="Gygi S.P."/>
        </authorList>
    </citation>
    <scope>PHOSPHORYLATION [LARGE SCALE ANALYSIS] AT SER-232 AND SER-543</scope>
    <scope>IDENTIFICATION BY MASS SPECTROMETRY [LARGE SCALE ANALYSIS]</scope>
    <source>
        <tissue>Cervix carcinoma</tissue>
    </source>
</reference>
<reference key="8">
    <citation type="journal article" date="2010" name="Sci. Signal.">
        <title>Quantitative phosphoproteomics reveals widespread full phosphorylation site occupancy during mitosis.</title>
        <authorList>
            <person name="Olsen J.V."/>
            <person name="Vermeulen M."/>
            <person name="Santamaria A."/>
            <person name="Kumar C."/>
            <person name="Miller M.L."/>
            <person name="Jensen L.J."/>
            <person name="Gnad F."/>
            <person name="Cox J."/>
            <person name="Jensen T.S."/>
            <person name="Nigg E.A."/>
            <person name="Brunak S."/>
            <person name="Mann M."/>
        </authorList>
    </citation>
    <scope>PHOSPHORYLATION [LARGE SCALE ANALYSIS] AT SER-232</scope>
    <scope>IDENTIFICATION BY MASS SPECTROMETRY [LARGE SCALE ANALYSIS]</scope>
    <source>
        <tissue>Cervix carcinoma</tissue>
    </source>
</reference>
<reference key="9">
    <citation type="journal article" date="2013" name="J. Proteome Res.">
        <title>Toward a comprehensive characterization of a human cancer cell phosphoproteome.</title>
        <authorList>
            <person name="Zhou H."/>
            <person name="Di Palma S."/>
            <person name="Preisinger C."/>
            <person name="Peng M."/>
            <person name="Polat A.N."/>
            <person name="Heck A.J."/>
            <person name="Mohammed S."/>
        </authorList>
    </citation>
    <scope>PHOSPHORYLATION [LARGE SCALE ANALYSIS] AT SER-520 AND SER-529</scope>
    <scope>IDENTIFICATION BY MASS SPECTROMETRY [LARGE SCALE ANALYSIS]</scope>
    <source>
        <tissue>Cervix carcinoma</tissue>
    </source>
</reference>
<reference key="10">
    <citation type="journal article" date="2014" name="J. Proteomics">
        <title>An enzyme assisted RP-RPLC approach for in-depth analysis of human liver phosphoproteome.</title>
        <authorList>
            <person name="Bian Y."/>
            <person name="Song C."/>
            <person name="Cheng K."/>
            <person name="Dong M."/>
            <person name="Wang F."/>
            <person name="Huang J."/>
            <person name="Sun D."/>
            <person name="Wang L."/>
            <person name="Ye M."/>
            <person name="Zou H."/>
        </authorList>
    </citation>
    <scope>PHOSPHORYLATION [LARGE SCALE ANALYSIS] AT SER-30 AND SER-106</scope>
    <scope>IDENTIFICATION BY MASS SPECTROMETRY [LARGE SCALE ANALYSIS]</scope>
    <source>
        <tissue>Liver</tissue>
    </source>
</reference>
<reference key="11">
    <citation type="journal article" date="2014" name="Mol. Cell. Proteomics">
        <title>Immunoaffinity enrichment and mass spectrometry analysis of protein methylation.</title>
        <authorList>
            <person name="Guo A."/>
            <person name="Gu H."/>
            <person name="Zhou J."/>
            <person name="Mulhern D."/>
            <person name="Wang Y."/>
            <person name="Lee K.A."/>
            <person name="Yang V."/>
            <person name="Aguiar M."/>
            <person name="Kornhauser J."/>
            <person name="Jia X."/>
            <person name="Ren J."/>
            <person name="Beausoleil S.A."/>
            <person name="Silva J.C."/>
            <person name="Vemulapalli V."/>
            <person name="Bedford M.T."/>
            <person name="Comb M.J."/>
        </authorList>
    </citation>
    <scope>METHYLATION [LARGE SCALE ANALYSIS] AT ARG-14</scope>
    <scope>IDENTIFICATION BY MASS SPECTROMETRY [LARGE SCALE ANALYSIS]</scope>
    <source>
        <tissue>Colon carcinoma</tissue>
    </source>
</reference>
<gene>
    <name evidence="17" type="primary">RTKN</name>
    <name type="synonym">RTKN1</name>
</gene>
<dbReference type="EMBL" id="AF049227">
    <property type="protein sequence ID" value="AAL16767.1"/>
    <property type="status" value="ALT_FRAME"/>
    <property type="molecule type" value="mRNA"/>
</dbReference>
<dbReference type="EMBL" id="AF290512">
    <property type="protein sequence ID" value="AAG01181.1"/>
    <property type="molecule type" value="mRNA"/>
</dbReference>
<dbReference type="EMBL" id="AC005041">
    <property type="status" value="NOT_ANNOTATED_CDS"/>
    <property type="molecule type" value="Genomic_DNA"/>
</dbReference>
<dbReference type="EMBL" id="BC004558">
    <property type="protein sequence ID" value="AAH04558.2"/>
    <property type="molecule type" value="mRNA"/>
</dbReference>
<dbReference type="EMBL" id="BC017727">
    <property type="protein sequence ID" value="AAH17727.1"/>
    <property type="molecule type" value="mRNA"/>
</dbReference>
<dbReference type="CCDS" id="CCDS1941.1">
    <molecule id="Q9BST9-2"/>
</dbReference>
<dbReference type="CCDS" id="CCDS33226.1">
    <molecule id="Q9BST9-1"/>
</dbReference>
<dbReference type="CCDS" id="CCDS42699.1">
    <molecule id="Q9BST9-3"/>
</dbReference>
<dbReference type="RefSeq" id="NP_001015055.1">
    <molecule id="Q9BST9-1"/>
    <property type="nucleotide sequence ID" value="NM_001015055.2"/>
</dbReference>
<dbReference type="RefSeq" id="NP_001015056.1">
    <molecule id="Q9BST9-3"/>
    <property type="nucleotide sequence ID" value="NM_001015056.1"/>
</dbReference>
<dbReference type="RefSeq" id="NP_149035.1">
    <molecule id="Q9BST9-2"/>
    <property type="nucleotide sequence ID" value="NM_033046.2"/>
</dbReference>
<dbReference type="RefSeq" id="XP_016860124.1">
    <molecule id="Q9BST9-2"/>
    <property type="nucleotide sequence ID" value="XM_017004635.3"/>
</dbReference>
<dbReference type="RefSeq" id="XP_054199267.1">
    <molecule id="Q9BST9-2"/>
    <property type="nucleotide sequence ID" value="XM_054343292.1"/>
</dbReference>
<dbReference type="SMR" id="Q9BST9"/>
<dbReference type="BioGRID" id="112156">
    <property type="interactions" value="116"/>
</dbReference>
<dbReference type="DIP" id="DIP-31098N"/>
<dbReference type="FunCoup" id="Q9BST9">
    <property type="interactions" value="176"/>
</dbReference>
<dbReference type="IntAct" id="Q9BST9">
    <property type="interactions" value="36"/>
</dbReference>
<dbReference type="MINT" id="Q9BST9"/>
<dbReference type="STRING" id="9606.ENSP00000272430"/>
<dbReference type="GlyGen" id="Q9BST9">
    <property type="glycosylation" value="1 site"/>
</dbReference>
<dbReference type="iPTMnet" id="Q9BST9"/>
<dbReference type="PhosphoSitePlus" id="Q9BST9"/>
<dbReference type="BioMuta" id="RTKN"/>
<dbReference type="DMDM" id="74733052"/>
<dbReference type="jPOST" id="Q9BST9"/>
<dbReference type="MassIVE" id="Q9BST9"/>
<dbReference type="PaxDb" id="9606-ENSP00000272430"/>
<dbReference type="PeptideAtlas" id="Q9BST9"/>
<dbReference type="ProteomicsDB" id="43242"/>
<dbReference type="ProteomicsDB" id="78923">
    <molecule id="Q9BST9-1"/>
</dbReference>
<dbReference type="ProteomicsDB" id="78924">
    <molecule id="Q9BST9-2"/>
</dbReference>
<dbReference type="ProteomicsDB" id="78925">
    <molecule id="Q9BST9-3"/>
</dbReference>
<dbReference type="Pumba" id="Q9BST9"/>
<dbReference type="Antibodypedia" id="31499">
    <property type="antibodies" value="253 antibodies from 32 providers"/>
</dbReference>
<dbReference type="DNASU" id="6242"/>
<dbReference type="Ensembl" id="ENST00000233330.6">
    <molecule id="Q9BST9-3"/>
    <property type="protein sequence ID" value="ENSP00000233330.6"/>
    <property type="gene ID" value="ENSG00000114993.17"/>
</dbReference>
<dbReference type="Ensembl" id="ENST00000272430.10">
    <molecule id="Q9BST9-1"/>
    <property type="protein sequence ID" value="ENSP00000272430.5"/>
    <property type="gene ID" value="ENSG00000114993.17"/>
</dbReference>
<dbReference type="Ensembl" id="ENST00000305557.9">
    <molecule id="Q9BST9-2"/>
    <property type="protein sequence ID" value="ENSP00000305298.5"/>
    <property type="gene ID" value="ENSG00000114993.17"/>
</dbReference>
<dbReference type="GeneID" id="6242"/>
<dbReference type="KEGG" id="hsa:6242"/>
<dbReference type="MANE-Select" id="ENST00000272430.10">
    <property type="protein sequence ID" value="ENSP00000272430.5"/>
    <property type="RefSeq nucleotide sequence ID" value="NM_001015055.2"/>
    <property type="RefSeq protein sequence ID" value="NP_001015055.1"/>
</dbReference>
<dbReference type="UCSC" id="uc002slc.4">
    <molecule id="Q9BST9-1"/>
    <property type="organism name" value="human"/>
</dbReference>
<dbReference type="AGR" id="HGNC:10466"/>
<dbReference type="CTD" id="6242"/>
<dbReference type="DisGeNET" id="6242"/>
<dbReference type="GeneCards" id="RTKN"/>
<dbReference type="HGNC" id="HGNC:10466">
    <property type="gene designation" value="RTKN"/>
</dbReference>
<dbReference type="HPA" id="ENSG00000114993">
    <property type="expression patterns" value="Tissue enhanced (brain, liver)"/>
</dbReference>
<dbReference type="MIM" id="602288">
    <property type="type" value="gene"/>
</dbReference>
<dbReference type="neXtProt" id="NX_Q9BST9"/>
<dbReference type="OpenTargets" id="ENSG00000114993"/>
<dbReference type="PharmGKB" id="PA34879"/>
<dbReference type="VEuPathDB" id="HostDB:ENSG00000114993"/>
<dbReference type="eggNOG" id="ENOG502QRWR">
    <property type="taxonomic scope" value="Eukaryota"/>
</dbReference>
<dbReference type="GeneTree" id="ENSGT00940000158491"/>
<dbReference type="HOGENOM" id="CLU_025066_2_0_1"/>
<dbReference type="InParanoid" id="Q9BST9"/>
<dbReference type="OMA" id="CMTQPSA"/>
<dbReference type="OrthoDB" id="5817051at2759"/>
<dbReference type="PAN-GO" id="Q9BST9">
    <property type="GO annotations" value="5 GO annotations based on evolutionary models"/>
</dbReference>
<dbReference type="PhylomeDB" id="Q9BST9"/>
<dbReference type="TreeFam" id="TF331476"/>
<dbReference type="PathwayCommons" id="Q9BST9"/>
<dbReference type="Reactome" id="R-HSA-5666185">
    <property type="pathway name" value="RHO GTPases Activate Rhotekin and Rhophilins"/>
</dbReference>
<dbReference type="Reactome" id="R-HSA-8980692">
    <property type="pathway name" value="RHOA GTPase cycle"/>
</dbReference>
<dbReference type="Reactome" id="R-HSA-9013026">
    <property type="pathway name" value="RHOB GTPase cycle"/>
</dbReference>
<dbReference type="Reactome" id="R-HSA-9013106">
    <property type="pathway name" value="RHOC GTPase cycle"/>
</dbReference>
<dbReference type="SignaLink" id="Q9BST9"/>
<dbReference type="SIGNOR" id="Q9BST9"/>
<dbReference type="BioGRID-ORCS" id="6242">
    <property type="hits" value="29 hits in 1157 CRISPR screens"/>
</dbReference>
<dbReference type="ChiTaRS" id="RTKN">
    <property type="organism name" value="human"/>
</dbReference>
<dbReference type="GeneWiki" id="RTKN"/>
<dbReference type="GenomeRNAi" id="6242"/>
<dbReference type="Pharos" id="Q9BST9">
    <property type="development level" value="Tbio"/>
</dbReference>
<dbReference type="PRO" id="PR:Q9BST9"/>
<dbReference type="Proteomes" id="UP000005640">
    <property type="component" value="Chromosome 2"/>
</dbReference>
<dbReference type="RNAct" id="Q9BST9">
    <property type="molecule type" value="protein"/>
</dbReference>
<dbReference type="Bgee" id="ENSG00000114993">
    <property type="expression patterns" value="Expressed in C1 segment of cervical spinal cord and 159 other cell types or tissues"/>
</dbReference>
<dbReference type="ExpressionAtlas" id="Q9BST9">
    <property type="expression patterns" value="baseline and differential"/>
</dbReference>
<dbReference type="GO" id="GO:0005826">
    <property type="term" value="C:actomyosin contractile ring"/>
    <property type="evidence" value="ECO:0000318"/>
    <property type="project" value="GO_Central"/>
</dbReference>
<dbReference type="GO" id="GO:0005829">
    <property type="term" value="C:cytosol"/>
    <property type="evidence" value="ECO:0000304"/>
    <property type="project" value="Reactome"/>
</dbReference>
<dbReference type="GO" id="GO:0005525">
    <property type="term" value="F:GTP binding"/>
    <property type="evidence" value="ECO:0007669"/>
    <property type="project" value="UniProtKB-KW"/>
</dbReference>
<dbReference type="GO" id="GO:0005095">
    <property type="term" value="F:GTPase inhibitor activity"/>
    <property type="evidence" value="ECO:0000314"/>
    <property type="project" value="UniProtKB"/>
</dbReference>
<dbReference type="GO" id="GO:0031267">
    <property type="term" value="F:small GTPase binding"/>
    <property type="evidence" value="ECO:0000314"/>
    <property type="project" value="UniProtKB"/>
</dbReference>
<dbReference type="GO" id="GO:0000915">
    <property type="term" value="P:actomyosin contractile ring assembly"/>
    <property type="evidence" value="ECO:0000318"/>
    <property type="project" value="GO_Central"/>
</dbReference>
<dbReference type="GO" id="GO:0006915">
    <property type="term" value="P:apoptotic process"/>
    <property type="evidence" value="ECO:0007669"/>
    <property type="project" value="UniProtKB-KW"/>
</dbReference>
<dbReference type="GO" id="GO:0000281">
    <property type="term" value="P:mitotic cytokinesis"/>
    <property type="evidence" value="ECO:0000318"/>
    <property type="project" value="GO_Central"/>
</dbReference>
<dbReference type="GO" id="GO:0042981">
    <property type="term" value="P:regulation of apoptotic process"/>
    <property type="evidence" value="ECO:0000314"/>
    <property type="project" value="UniProtKB"/>
</dbReference>
<dbReference type="GO" id="GO:0007266">
    <property type="term" value="P:Rho protein signal transduction"/>
    <property type="evidence" value="ECO:0000314"/>
    <property type="project" value="UniProtKB"/>
</dbReference>
<dbReference type="GO" id="GO:0031106">
    <property type="term" value="P:septin ring organization"/>
    <property type="evidence" value="ECO:0000318"/>
    <property type="project" value="GO_Central"/>
</dbReference>
<dbReference type="GO" id="GO:0007165">
    <property type="term" value="P:signal transduction"/>
    <property type="evidence" value="ECO:0000314"/>
    <property type="project" value="UniProtKB"/>
</dbReference>
<dbReference type="CDD" id="cd13249">
    <property type="entry name" value="PH_rhotekin2"/>
    <property type="match status" value="1"/>
</dbReference>
<dbReference type="FunFam" id="2.30.29.30:FF:000233">
    <property type="entry name" value="rhotekin isoform X3"/>
    <property type="match status" value="1"/>
</dbReference>
<dbReference type="Gene3D" id="2.30.29.30">
    <property type="entry name" value="Pleckstrin-homology domain (PH domain)/Phosphotyrosine-binding domain (PTB)"/>
    <property type="match status" value="1"/>
</dbReference>
<dbReference type="InterPro" id="IPR012966">
    <property type="entry name" value="AHD"/>
</dbReference>
<dbReference type="InterPro" id="IPR051364">
    <property type="entry name" value="Cytokinesis/Rho-signaling"/>
</dbReference>
<dbReference type="InterPro" id="IPR011072">
    <property type="entry name" value="HR1_rho-bd"/>
</dbReference>
<dbReference type="InterPro" id="IPR011993">
    <property type="entry name" value="PH-like_dom_sf"/>
</dbReference>
<dbReference type="InterPro" id="IPR001849">
    <property type="entry name" value="PH_domain"/>
</dbReference>
<dbReference type="PANTHER" id="PTHR21538">
    <property type="entry name" value="ANILLIN/RHOTEKIN RTKN"/>
    <property type="match status" value="1"/>
</dbReference>
<dbReference type="PANTHER" id="PTHR21538:SF19">
    <property type="entry name" value="RHOTEKIN"/>
    <property type="match status" value="1"/>
</dbReference>
<dbReference type="Pfam" id="PF08174">
    <property type="entry name" value="Anillin"/>
    <property type="match status" value="1"/>
</dbReference>
<dbReference type="Pfam" id="PF00169">
    <property type="entry name" value="PH"/>
    <property type="match status" value="1"/>
</dbReference>
<dbReference type="SMART" id="SM00742">
    <property type="entry name" value="Hr1"/>
    <property type="match status" value="1"/>
</dbReference>
<dbReference type="SMART" id="SM00233">
    <property type="entry name" value="PH"/>
    <property type="match status" value="1"/>
</dbReference>
<dbReference type="SUPFAM" id="SSF50729">
    <property type="entry name" value="PH domain-like"/>
    <property type="match status" value="1"/>
</dbReference>
<dbReference type="PROSITE" id="PS50003">
    <property type="entry name" value="PH_DOMAIN"/>
    <property type="match status" value="1"/>
</dbReference>
<dbReference type="PROSITE" id="PS51860">
    <property type="entry name" value="REM_1"/>
    <property type="match status" value="1"/>
</dbReference>
<organism>
    <name type="scientific">Homo sapiens</name>
    <name type="common">Human</name>
    <dbReference type="NCBI Taxonomy" id="9606"/>
    <lineage>
        <taxon>Eukaryota</taxon>
        <taxon>Metazoa</taxon>
        <taxon>Chordata</taxon>
        <taxon>Craniata</taxon>
        <taxon>Vertebrata</taxon>
        <taxon>Euteleostomi</taxon>
        <taxon>Mammalia</taxon>
        <taxon>Eutheria</taxon>
        <taxon>Euarchontoglires</taxon>
        <taxon>Primates</taxon>
        <taxon>Haplorrhini</taxon>
        <taxon>Catarrhini</taxon>
        <taxon>Hominidae</taxon>
        <taxon>Homo</taxon>
    </lineage>
</organism>